<proteinExistence type="inferred from homology"/>
<reference key="1">
    <citation type="journal article" date="2000" name="J. Virol.">
        <title>The genome of a very virulent Marek's disease virus.</title>
        <authorList>
            <person name="Tulman E.R."/>
            <person name="Afonso C.L."/>
            <person name="Lu Z."/>
            <person name="Zsak L."/>
            <person name="Rock D.L."/>
            <person name="Kutish G.F."/>
        </authorList>
    </citation>
    <scope>NUCLEOTIDE SEQUENCE [LARGE SCALE GENOMIC DNA]</scope>
</reference>
<evidence type="ECO:0000255" key="1">
    <source>
        <dbReference type="HAMAP-Rule" id="MF_04025"/>
    </source>
</evidence>
<gene>
    <name evidence="1" type="primary">CVC2</name>
    <name type="ordered locus">MDV037</name>
</gene>
<feature type="chain" id="PRO_0000406512" description="Capsid vertex component 2">
    <location>
        <begin position="1"/>
        <end position="583"/>
    </location>
</feature>
<feature type="region of interest" description="Interaction with major capsid protein/MCP" evidence="1">
    <location>
        <begin position="1"/>
        <end position="49"/>
    </location>
</feature>
<dbReference type="EMBL" id="AF243438">
    <property type="protein sequence ID" value="AAG14217.1"/>
    <property type="molecule type" value="Genomic_DNA"/>
</dbReference>
<dbReference type="RefSeq" id="YP_001033953.1">
    <property type="nucleotide sequence ID" value="NC_002229.3"/>
</dbReference>
<dbReference type="SMR" id="Q9E6P3"/>
<dbReference type="GeneID" id="4811497"/>
<dbReference type="KEGG" id="vg:4811497"/>
<dbReference type="Proteomes" id="UP000008072">
    <property type="component" value="Segment"/>
</dbReference>
<dbReference type="GO" id="GO:0043657">
    <property type="term" value="C:host cell"/>
    <property type="evidence" value="ECO:0007669"/>
    <property type="project" value="GOC"/>
</dbReference>
<dbReference type="GO" id="GO:0042025">
    <property type="term" value="C:host cell nucleus"/>
    <property type="evidence" value="ECO:0007669"/>
    <property type="project" value="UniProtKB-SubCell"/>
</dbReference>
<dbReference type="GO" id="GO:0019028">
    <property type="term" value="C:viral capsid"/>
    <property type="evidence" value="ECO:0007669"/>
    <property type="project" value="UniProtKB-KW"/>
</dbReference>
<dbReference type="GO" id="GO:0046718">
    <property type="term" value="P:symbiont entry into host cell"/>
    <property type="evidence" value="ECO:0007669"/>
    <property type="project" value="UniProtKB-KW"/>
</dbReference>
<dbReference type="GO" id="GO:0019072">
    <property type="term" value="P:viral genome packaging"/>
    <property type="evidence" value="ECO:0007669"/>
    <property type="project" value="InterPro"/>
</dbReference>
<dbReference type="GO" id="GO:0075732">
    <property type="term" value="P:viral penetration into host nucleus"/>
    <property type="evidence" value="ECO:0007669"/>
    <property type="project" value="UniProtKB-KW"/>
</dbReference>
<dbReference type="HAMAP" id="MF_04025">
    <property type="entry name" value="HSV_CVC2"/>
    <property type="match status" value="1"/>
</dbReference>
<dbReference type="InterPro" id="IPR002493">
    <property type="entry name" value="Herpes_UL25"/>
</dbReference>
<dbReference type="Pfam" id="PF01499">
    <property type="entry name" value="Herpes_UL25"/>
    <property type="match status" value="1"/>
</dbReference>
<organismHost>
    <name type="scientific">Gallus gallus</name>
    <name type="common">Chicken</name>
    <dbReference type="NCBI Taxonomy" id="9031"/>
</organismHost>
<name>CVC2_GAHVM</name>
<accession>Q9E6P3</accession>
<protein>
    <recommendedName>
        <fullName evidence="1">Capsid vertex component 2</fullName>
    </recommendedName>
</protein>
<keyword id="KW-0167">Capsid protein</keyword>
<keyword id="KW-1048">Host nucleus</keyword>
<keyword id="KW-0945">Host-virus interaction</keyword>
<keyword id="KW-1185">Reference proteome</keyword>
<keyword id="KW-0231">Viral genome packaging</keyword>
<keyword id="KW-1163">Viral penetration into host nucleus</keyword>
<keyword id="KW-1188">Viral release from host cell</keyword>
<keyword id="KW-0946">Virion</keyword>
<keyword id="KW-1160">Virus entry into host cell</keyword>
<sequence length="583" mass="64742">MANFIWDARILTGDGMEMFPADVKNFIAPPWPIEFWKEPVFTSNRANMERQLAIITARNNAATAALNNLDGHTDSIAIEIDRRLRPIEEKIEHIATALADLEHAAAAAELADAAMDIAVSAVEKSGQHKEDVNITSAREIQIVKNDPLLRYDSNLSVDLLNLVYANRNVVNSGVVFGTWYRTLQNALVADKPSVARKIDYHGGRMSRTFIVTAITSLQSCGRLYVGTRYYSSLECAILCLYAFYAKTGTNISHPTNFMSAIESVPTYLEHLSTRLASSDSRQKYGFDWARLPKDTFDSPCGKYERGALHDHSILRALVNSRVLPPGAGSLPRGDVIPEIDAEQGIRNDEVNRAAAALLGRAQPLFLMEDQPLLRSTIDTITALLLLHRLLWNTNIYSARVKNIFQLGAFVPGIVPDLTVGASVDTPGDIIKSDGRNLMFLFQRYVAPMYGTVKGIEFTQLFPGLVALCLDVPLFSGGIFSHRAPLSRVVDVSLGKYQASLVKLISLELENRSRANIVSVCEVITAHDLVTLQYEQGLESLMQIQRPRSRLFETKKLSAFNVETDYDLIYFICLGYIPKLISTL</sequence>
<comment type="function">
    <text evidence="1">Capsid vertex-specific component that plays a role during viral DNA encapsidation, assuring correct genome cleavage and presumably stabilizing capsids that contain full-length viral genomes. Participates in the interaction between the capsid and the tegument through interaction with the large tegument protein/LTP.</text>
</comment>
<comment type="subunit">
    <text evidence="1">Heterodimerizes with CVC1. Interacts with major capsid protein/MCP and triplex capsid protein 1/TRX1 at the pentamer vertices. Interacts with the large tegument protein/LTP.</text>
</comment>
<comment type="subcellular location">
    <subcellularLocation>
        <location evidence="1">Virion</location>
    </subcellularLocation>
    <subcellularLocation>
        <location evidence="1">Host nucleus</location>
    </subcellularLocation>
</comment>
<comment type="similarity">
    <text evidence="1">Belongs to the herpesviridae CVC2 protein family.</text>
</comment>
<organism>
    <name type="scientific">Gallid herpesvirus 2 (strain Chicken/Md5/ATCC VR-987)</name>
    <name type="common">GaHV-2</name>
    <name type="synonym">Marek's disease herpesvirus type 1</name>
    <dbReference type="NCBI Taxonomy" id="10389"/>
    <lineage>
        <taxon>Viruses</taxon>
        <taxon>Duplodnaviria</taxon>
        <taxon>Heunggongvirae</taxon>
        <taxon>Peploviricota</taxon>
        <taxon>Herviviricetes</taxon>
        <taxon>Herpesvirales</taxon>
        <taxon>Orthoherpesviridae</taxon>
        <taxon>Alphaherpesvirinae</taxon>
        <taxon>Mardivirus</taxon>
        <taxon>Mardivirus gallidalpha2</taxon>
        <taxon>Gallid alphaherpesvirus 2</taxon>
    </lineage>
</organism>